<organism>
    <name type="scientific">Bifidobacterium longum (strain NCC 2705)</name>
    <dbReference type="NCBI Taxonomy" id="206672"/>
    <lineage>
        <taxon>Bacteria</taxon>
        <taxon>Bacillati</taxon>
        <taxon>Actinomycetota</taxon>
        <taxon>Actinomycetes</taxon>
        <taxon>Bifidobacteriales</taxon>
        <taxon>Bifidobacteriaceae</taxon>
        <taxon>Bifidobacterium</taxon>
    </lineage>
</organism>
<proteinExistence type="inferred from homology"/>
<sequence>MTDTTVEAPATPRLKVKYNEQIIPELEKEFKYSNPMQVARVQKVVVSMGVGAAARDSKLIEGAVKDLTLITGQKPKITKAKKSVAQFHLREGQAIGAYVTLRGDRMWEFLDRLLTLALPRIRDFRGINGHQFDGQGNYNFGLTEQSMFHEIDPDSIDHVRGMDITVVTSTKDDKEAYALLKHLGFPFKEN</sequence>
<dbReference type="EMBL" id="AE014295">
    <property type="protein sequence ID" value="AAN25381.1"/>
    <property type="molecule type" value="Genomic_DNA"/>
</dbReference>
<dbReference type="RefSeq" id="NP_696745.1">
    <property type="nucleotide sequence ID" value="NC_004307.2"/>
</dbReference>
<dbReference type="RefSeq" id="WP_007053039.1">
    <property type="nucleotide sequence ID" value="NC_004307.2"/>
</dbReference>
<dbReference type="SMR" id="Q8G406"/>
<dbReference type="STRING" id="206672.BL1592"/>
<dbReference type="EnsemblBacteria" id="AAN25381">
    <property type="protein sequence ID" value="AAN25381"/>
    <property type="gene ID" value="BL1592"/>
</dbReference>
<dbReference type="GeneID" id="69578885"/>
<dbReference type="KEGG" id="blo:BL1592"/>
<dbReference type="PATRIC" id="fig|206672.9.peg.1647"/>
<dbReference type="HOGENOM" id="CLU_061015_2_1_11"/>
<dbReference type="OrthoDB" id="9806626at2"/>
<dbReference type="PhylomeDB" id="Q8G406"/>
<dbReference type="Proteomes" id="UP000000439">
    <property type="component" value="Chromosome"/>
</dbReference>
<dbReference type="GO" id="GO:1990904">
    <property type="term" value="C:ribonucleoprotein complex"/>
    <property type="evidence" value="ECO:0007669"/>
    <property type="project" value="UniProtKB-KW"/>
</dbReference>
<dbReference type="GO" id="GO:0005840">
    <property type="term" value="C:ribosome"/>
    <property type="evidence" value="ECO:0007669"/>
    <property type="project" value="UniProtKB-KW"/>
</dbReference>
<dbReference type="GO" id="GO:0019843">
    <property type="term" value="F:rRNA binding"/>
    <property type="evidence" value="ECO:0007669"/>
    <property type="project" value="UniProtKB-UniRule"/>
</dbReference>
<dbReference type="GO" id="GO:0003735">
    <property type="term" value="F:structural constituent of ribosome"/>
    <property type="evidence" value="ECO:0007669"/>
    <property type="project" value="InterPro"/>
</dbReference>
<dbReference type="GO" id="GO:0000049">
    <property type="term" value="F:tRNA binding"/>
    <property type="evidence" value="ECO:0007669"/>
    <property type="project" value="UniProtKB-UniRule"/>
</dbReference>
<dbReference type="GO" id="GO:0006412">
    <property type="term" value="P:translation"/>
    <property type="evidence" value="ECO:0007669"/>
    <property type="project" value="UniProtKB-UniRule"/>
</dbReference>
<dbReference type="FunFam" id="3.30.1440.10:FF:000001">
    <property type="entry name" value="50S ribosomal protein L5"/>
    <property type="match status" value="1"/>
</dbReference>
<dbReference type="Gene3D" id="3.30.1440.10">
    <property type="match status" value="1"/>
</dbReference>
<dbReference type="HAMAP" id="MF_01333_B">
    <property type="entry name" value="Ribosomal_uL5_B"/>
    <property type="match status" value="1"/>
</dbReference>
<dbReference type="InterPro" id="IPR002132">
    <property type="entry name" value="Ribosomal_uL5"/>
</dbReference>
<dbReference type="InterPro" id="IPR020930">
    <property type="entry name" value="Ribosomal_uL5_bac-type"/>
</dbReference>
<dbReference type="InterPro" id="IPR031309">
    <property type="entry name" value="Ribosomal_uL5_C"/>
</dbReference>
<dbReference type="InterPro" id="IPR022803">
    <property type="entry name" value="Ribosomal_uL5_dom_sf"/>
</dbReference>
<dbReference type="InterPro" id="IPR031310">
    <property type="entry name" value="Ribosomal_uL5_N"/>
</dbReference>
<dbReference type="NCBIfam" id="NF000585">
    <property type="entry name" value="PRK00010.1"/>
    <property type="match status" value="1"/>
</dbReference>
<dbReference type="PANTHER" id="PTHR11994">
    <property type="entry name" value="60S RIBOSOMAL PROTEIN L11-RELATED"/>
    <property type="match status" value="1"/>
</dbReference>
<dbReference type="Pfam" id="PF00281">
    <property type="entry name" value="Ribosomal_L5"/>
    <property type="match status" value="1"/>
</dbReference>
<dbReference type="Pfam" id="PF00673">
    <property type="entry name" value="Ribosomal_L5_C"/>
    <property type="match status" value="1"/>
</dbReference>
<dbReference type="PIRSF" id="PIRSF002161">
    <property type="entry name" value="Ribosomal_L5"/>
    <property type="match status" value="1"/>
</dbReference>
<dbReference type="SUPFAM" id="SSF55282">
    <property type="entry name" value="RL5-like"/>
    <property type="match status" value="1"/>
</dbReference>
<accession>Q8G406</accession>
<feature type="chain" id="PRO_0000124895" description="Large ribosomal subunit protein uL5">
    <location>
        <begin position="1"/>
        <end position="190"/>
    </location>
</feature>
<comment type="function">
    <text evidence="1">This is one of the proteins that bind and probably mediate the attachment of the 5S RNA into the large ribosomal subunit, where it forms part of the central protuberance. In the 70S ribosome it contacts protein S13 of the 30S subunit (bridge B1b), connecting the 2 subunits; this bridge is implicated in subunit movement. Contacts the P site tRNA; the 5S rRNA and some of its associated proteins might help stabilize positioning of ribosome-bound tRNAs.</text>
</comment>
<comment type="subunit">
    <text evidence="1">Part of the 50S ribosomal subunit; part of the 5S rRNA/L5/L18/L25 subcomplex. Contacts the 5S rRNA and the P site tRNA. Forms a bridge to the 30S subunit in the 70S ribosome.</text>
</comment>
<comment type="similarity">
    <text evidence="1">Belongs to the universal ribosomal protein uL5 family.</text>
</comment>
<reference key="1">
    <citation type="journal article" date="2002" name="Proc. Natl. Acad. Sci. U.S.A.">
        <title>The genome sequence of Bifidobacterium longum reflects its adaptation to the human gastrointestinal tract.</title>
        <authorList>
            <person name="Schell M.A."/>
            <person name="Karmirantzou M."/>
            <person name="Snel B."/>
            <person name="Vilanova D."/>
            <person name="Berger B."/>
            <person name="Pessi G."/>
            <person name="Zwahlen M.-C."/>
            <person name="Desiere F."/>
            <person name="Bork P."/>
            <person name="Delley M."/>
            <person name="Pridmore R.D."/>
            <person name="Arigoni F."/>
        </authorList>
    </citation>
    <scope>NUCLEOTIDE SEQUENCE [LARGE SCALE GENOMIC DNA]</scope>
    <source>
        <strain>NCC 2705</strain>
    </source>
</reference>
<evidence type="ECO:0000255" key="1">
    <source>
        <dbReference type="HAMAP-Rule" id="MF_01333"/>
    </source>
</evidence>
<evidence type="ECO:0000305" key="2"/>
<name>RL5_BIFLO</name>
<keyword id="KW-1185">Reference proteome</keyword>
<keyword id="KW-0687">Ribonucleoprotein</keyword>
<keyword id="KW-0689">Ribosomal protein</keyword>
<keyword id="KW-0694">RNA-binding</keyword>
<keyword id="KW-0699">rRNA-binding</keyword>
<keyword id="KW-0820">tRNA-binding</keyword>
<gene>
    <name evidence="1" type="primary">rplE</name>
    <name type="ordered locus">BL1592</name>
</gene>
<protein>
    <recommendedName>
        <fullName evidence="1">Large ribosomal subunit protein uL5</fullName>
    </recommendedName>
    <alternativeName>
        <fullName evidence="2">50S ribosomal protein L5</fullName>
    </alternativeName>
</protein>